<reference key="1">
    <citation type="journal article" date="1985" name="J. Biol. Chem.">
        <title>Wound-induced proteinase inhibitors from tomato leaves. II. The cDNA-deduced primary structure of pre-inhibitor II.</title>
        <authorList>
            <person name="Graham J.S."/>
            <person name="Pearce G."/>
            <person name="Merryweather J."/>
            <person name="Titani K."/>
            <person name="Ericsson L.H."/>
            <person name="Ryan C.A."/>
        </authorList>
    </citation>
    <scope>NUCLEOTIDE SEQUENCE [MRNA]</scope>
    <source>
        <tissue>Leaf</tissue>
    </source>
</reference>
<reference key="2">
    <citation type="journal article" date="2003" name="J. Biol. Chem.">
        <title>Structural basis of inhibition revealed by a 1:2 complex of the two-headed tomato inhibitor-II and subtilisin Carlsberg.</title>
        <authorList>
            <person name="Barrette-Ng I.H."/>
            <person name="Ng K.K.-S."/>
            <person name="Cherney M.M."/>
            <person name="Pearce G."/>
            <person name="Ryan C.A."/>
            <person name="James M.N.G."/>
        </authorList>
    </citation>
    <scope>X-RAY CRYSTALLOGRAPHY (2.5 ANGSTROMS) OF 31-141 IN COMPLEX WITH SUBTILISIN</scope>
</reference>
<feature type="signal peptide">
    <location>
        <begin position="1"/>
        <end position="25"/>
    </location>
</feature>
<feature type="chain" id="PRO_0000025310" description="Wound-induced proteinase inhibitor 2">
    <location>
        <begin position="26"/>
        <end position="148"/>
    </location>
</feature>
<feature type="repeat" description="1; trypsin-inhibitory">
    <location>
        <begin position="26"/>
        <end position="81"/>
    </location>
</feature>
<feature type="repeat" description="2; chymotrypsin-inhibitory">
    <location>
        <begin position="83"/>
        <end position="141"/>
    </location>
</feature>
<feature type="site" description="Reactive bond for trypsin">
    <location>
        <begin position="30"/>
        <end position="31"/>
    </location>
</feature>
<feature type="site" description="Reactive bond for chymotrypsin">
    <location>
        <begin position="87"/>
        <end position="88"/>
    </location>
</feature>
<feature type="disulfide bond">
    <location>
        <begin position="28"/>
        <end position="116"/>
    </location>
</feature>
<feature type="disulfide bond">
    <location>
        <begin position="32"/>
        <end position="112"/>
    </location>
</feature>
<feature type="disulfide bond">
    <location>
        <begin position="40"/>
        <end position="122"/>
    </location>
</feature>
<feature type="disulfide bond">
    <location>
        <begin position="52"/>
        <end position="89"/>
    </location>
</feature>
<feature type="disulfide bond">
    <location>
        <begin position="55"/>
        <end position="73"/>
    </location>
</feature>
<feature type="disulfide bond">
    <location>
        <begin position="56"/>
        <end position="85"/>
    </location>
</feature>
<feature type="disulfide bond">
    <location>
        <begin position="62"/>
        <end position="98"/>
    </location>
</feature>
<feature type="disulfide bond">
    <location>
        <begin position="115"/>
        <end position="133"/>
    </location>
</feature>
<feature type="strand" evidence="2">
    <location>
        <begin position="27"/>
        <end position="29"/>
    </location>
</feature>
<feature type="strand" evidence="3">
    <location>
        <begin position="37"/>
        <end position="39"/>
    </location>
</feature>
<feature type="strand" evidence="3">
    <location>
        <begin position="47"/>
        <end position="49"/>
    </location>
</feature>
<feature type="turn" evidence="3">
    <location>
        <begin position="55"/>
        <end position="57"/>
    </location>
</feature>
<feature type="strand" evidence="3">
    <location>
        <begin position="63"/>
        <end position="65"/>
    </location>
</feature>
<feature type="strand" evidence="3">
    <location>
        <begin position="71"/>
        <end position="74"/>
    </location>
</feature>
<feature type="strand" evidence="2">
    <location>
        <begin position="79"/>
        <end position="81"/>
    </location>
</feature>
<feature type="strand" evidence="2">
    <location>
        <begin position="84"/>
        <end position="86"/>
    </location>
</feature>
<feature type="strand" evidence="3">
    <location>
        <begin position="95"/>
        <end position="97"/>
    </location>
</feature>
<feature type="strand" evidence="3">
    <location>
        <begin position="105"/>
        <end position="107"/>
    </location>
</feature>
<feature type="turn" evidence="3">
    <location>
        <begin position="115"/>
        <end position="117"/>
    </location>
</feature>
<feature type="strand" evidence="3">
    <location>
        <begin position="123"/>
        <end position="125"/>
    </location>
</feature>
<feature type="strand" evidence="3">
    <location>
        <begin position="131"/>
        <end position="134"/>
    </location>
</feature>
<proteinExistence type="evidence at protein level"/>
<keyword id="KW-0002">3D-structure</keyword>
<keyword id="KW-1015">Disulfide bond</keyword>
<keyword id="KW-0646">Protease inhibitor</keyword>
<keyword id="KW-1185">Reference proteome</keyword>
<keyword id="KW-0677">Repeat</keyword>
<keyword id="KW-0964">Secreted</keyword>
<keyword id="KW-0722">Serine protease inhibitor</keyword>
<keyword id="KW-0732">Signal</keyword>
<sequence>MAVHKEVNFVAYLLIVLGMFLYVDAKACTRECGNLGFGICPRSEGSPLNPICINCCSGYKGCNYYNSFGKFICEGESDPKRPNACTFNCDPNIAYSRCPRSQGKSLIYPTGCTTCCTGYKGCYYFGKDGKFVCEGESDEPKANMYPVM</sequence>
<dbReference type="EMBL" id="K03291">
    <property type="protein sequence ID" value="AAA34201.1"/>
    <property type="molecule type" value="mRNA"/>
</dbReference>
<dbReference type="PIR" id="B24048">
    <property type="entry name" value="B24048"/>
</dbReference>
<dbReference type="RefSeq" id="NP_001234627.1">
    <property type="nucleotide sequence ID" value="NM_001247698.1"/>
</dbReference>
<dbReference type="PDB" id="1OYV">
    <property type="method" value="X-ray"/>
    <property type="resolution" value="2.50 A"/>
    <property type="chains" value="I=26-148"/>
</dbReference>
<dbReference type="PDB" id="1PJU">
    <property type="method" value="X-ray"/>
    <property type="resolution" value="2.15 A"/>
    <property type="chains" value="A/B/C/D=26-148"/>
</dbReference>
<dbReference type="PDBsum" id="1OYV"/>
<dbReference type="PDBsum" id="1PJU"/>
<dbReference type="SMR" id="P05119"/>
<dbReference type="STRING" id="4081.P05119"/>
<dbReference type="MEROPS" id="I20.003"/>
<dbReference type="MEROPS" id="I20.953"/>
<dbReference type="GeneID" id="543955"/>
<dbReference type="InParanoid" id="P05119"/>
<dbReference type="EvolutionaryTrace" id="P05119"/>
<dbReference type="Proteomes" id="UP000004994">
    <property type="component" value="Unplaced"/>
</dbReference>
<dbReference type="ExpressionAtlas" id="P05119">
    <property type="expression patterns" value="baseline and differential"/>
</dbReference>
<dbReference type="GO" id="GO:0005576">
    <property type="term" value="C:extracellular region"/>
    <property type="evidence" value="ECO:0007669"/>
    <property type="project" value="UniProtKB-SubCell"/>
</dbReference>
<dbReference type="GO" id="GO:0004867">
    <property type="term" value="F:serine-type endopeptidase inhibitor activity"/>
    <property type="evidence" value="ECO:0007669"/>
    <property type="project" value="UniProtKB-KW"/>
</dbReference>
<dbReference type="Gene3D" id="3.30.60.30">
    <property type="match status" value="2"/>
</dbReference>
<dbReference type="InterPro" id="IPR003465">
    <property type="entry name" value="Prot_inh_I20"/>
</dbReference>
<dbReference type="InterPro" id="IPR051391">
    <property type="entry name" value="Protease_inhibitor_I20"/>
</dbReference>
<dbReference type="PANTHER" id="PTHR33832">
    <property type="entry name" value="SERINE-TYPE ENDOPEPTIDASE INHIBITOR"/>
    <property type="match status" value="1"/>
</dbReference>
<dbReference type="PANTHER" id="PTHR33832:SF20">
    <property type="entry name" value="WOUND-INDUCED PROTEINASE INHIBITOR 2"/>
    <property type="match status" value="1"/>
</dbReference>
<dbReference type="Pfam" id="PF02428">
    <property type="entry name" value="Prot_inhib_II"/>
    <property type="match status" value="2"/>
</dbReference>
<dbReference type="SUPFAM" id="SSF100897">
    <property type="entry name" value="Plant proteinase inhibitors"/>
    <property type="match status" value="1"/>
</dbReference>
<evidence type="ECO:0000305" key="1"/>
<evidence type="ECO:0007829" key="2">
    <source>
        <dbReference type="PDB" id="1OYV"/>
    </source>
</evidence>
<evidence type="ECO:0007829" key="3">
    <source>
        <dbReference type="PDB" id="1PJU"/>
    </source>
</evidence>
<organism>
    <name type="scientific">Solanum lycopersicum</name>
    <name type="common">Tomato</name>
    <name type="synonym">Lycopersicon esculentum</name>
    <dbReference type="NCBI Taxonomy" id="4081"/>
    <lineage>
        <taxon>Eukaryota</taxon>
        <taxon>Viridiplantae</taxon>
        <taxon>Streptophyta</taxon>
        <taxon>Embryophyta</taxon>
        <taxon>Tracheophyta</taxon>
        <taxon>Spermatophyta</taxon>
        <taxon>Magnoliopsida</taxon>
        <taxon>eudicotyledons</taxon>
        <taxon>Gunneridae</taxon>
        <taxon>Pentapetalae</taxon>
        <taxon>asterids</taxon>
        <taxon>lamiids</taxon>
        <taxon>Solanales</taxon>
        <taxon>Solanaceae</taxon>
        <taxon>Solanoideae</taxon>
        <taxon>Solaneae</taxon>
        <taxon>Solanum</taxon>
        <taxon>Solanum subgen. Lycopersicon</taxon>
    </lineage>
</organism>
<protein>
    <recommendedName>
        <fullName>Wound-induced proteinase inhibitor 2</fullName>
    </recommendedName>
    <alternativeName>
        <fullName>Wound-induced proteinase inhibitor II</fullName>
    </alternativeName>
</protein>
<name>IP21_SOLLC</name>
<comment type="function">
    <text>Potent inhibitor of both trypsin and chymotrypsin.</text>
</comment>
<comment type="subcellular location">
    <subcellularLocation>
        <location>Secreted</location>
    </subcellularLocation>
</comment>
<comment type="induction">
    <text>Mechanical damage (i.e. insect chewing) to this plant results in the systemic release of a factor from the wound site. Within the leaves it induces the cytoplasmic synthesis of proteinase inhibitors I and II.</text>
</comment>
<comment type="similarity">
    <text evidence="1">Belongs to the protease inhibitor I20 (potato type II proteinase inhibitor) family.</text>
</comment>
<accession>P05119</accession>